<evidence type="ECO:0000250" key="1">
    <source>
        <dbReference type="UniProtKB" id="P15468"/>
    </source>
</evidence>
<evidence type="ECO:0000250" key="2">
    <source>
        <dbReference type="UniProtKB" id="P34096"/>
    </source>
</evidence>
<evidence type="ECO:0000250" key="3">
    <source>
        <dbReference type="UniProtKB" id="Q9H1E1"/>
    </source>
</evidence>
<evidence type="ECO:0000269" key="4">
    <source>
    </source>
</evidence>
<evidence type="ECO:0000305" key="5"/>
<name>RNAS4_BOVIN</name>
<proteinExistence type="evidence at protein level"/>
<reference key="1">
    <citation type="journal article" date="2005" name="BMC Genomics">
        <title>Characterization of 954 bovine full-CDS cDNA sequences.</title>
        <authorList>
            <person name="Harhay G.P."/>
            <person name="Sonstegard T.S."/>
            <person name="Keele J.W."/>
            <person name="Heaton M.P."/>
            <person name="Clawson M.L."/>
            <person name="Snelling W.M."/>
            <person name="Wiedmann R.T."/>
            <person name="Van Tassell C.P."/>
            <person name="Smith T.P.L."/>
        </authorList>
    </citation>
    <scope>NUCLEOTIDE SEQUENCE [LARGE SCALE MRNA]</scope>
    <source>
        <strain>Hereford</strain>
    </source>
</reference>
<reference key="2">
    <citation type="submission" date="2005-08" db="EMBL/GenBank/DDBJ databases">
        <authorList>
            <consortium name="NIH - Mammalian Gene Collection (MGC) project"/>
        </authorList>
    </citation>
    <scope>NUCLEOTIDE SEQUENCE [LARGE SCALE MRNA]</scope>
    <source>
        <tissue>Ileum</tissue>
    </source>
</reference>
<reference key="3">
    <citation type="journal article" date="1990" name="J. Biochem.">
        <title>Primary structure of an alkaline ribonuclease from bovine liver.</title>
        <authorList>
            <person name="Hosoya K."/>
            <person name="Nagareda Y."/>
            <person name="Hasemi S."/>
            <person name="Sanda A."/>
            <person name="Takizawa Y."/>
            <person name="Watanabe H."/>
            <person name="Ohgi K."/>
            <person name="Irie M."/>
        </authorList>
    </citation>
    <scope>PROTEIN SEQUENCE OF 29-147</scope>
    <scope>SIGNAL SEQUENCE CLEAVAGE SITE</scope>
    <scope>PYROGLUTAMATE FORMATION AT GLN-29</scope>
    <source>
        <tissue>Liver</tissue>
    </source>
</reference>
<reference key="4">
    <citation type="submission" date="1998-07" db="EMBL/GenBank/DDBJ databases">
        <title>Evolution of three primate ribonuclease genes: comparative analysis of RNase 4, RNase k6, and RNase 2 (eosinophil-derived neurotoxin).</title>
        <authorList>
            <person name="Deming M.S."/>
            <person name="Dyer K.D."/>
            <person name="Seekamp R.L."/>
            <person name="Rosenberg H.F."/>
        </authorList>
    </citation>
    <scope>NUCLEOTIDE SEQUENCE [GENOMIC DNA] OF 29-147</scope>
</reference>
<organism>
    <name type="scientific">Bos taurus</name>
    <name type="common">Bovine</name>
    <dbReference type="NCBI Taxonomy" id="9913"/>
    <lineage>
        <taxon>Eukaryota</taxon>
        <taxon>Metazoa</taxon>
        <taxon>Chordata</taxon>
        <taxon>Craniata</taxon>
        <taxon>Vertebrata</taxon>
        <taxon>Euteleostomi</taxon>
        <taxon>Mammalia</taxon>
        <taxon>Eutheria</taxon>
        <taxon>Laurasiatheria</taxon>
        <taxon>Artiodactyla</taxon>
        <taxon>Ruminantia</taxon>
        <taxon>Pecora</taxon>
        <taxon>Bovidae</taxon>
        <taxon>Bovinae</taxon>
        <taxon>Bos</taxon>
    </lineage>
</organism>
<sequence>MALQRTQAFLLLLLLTLLGLGLVQPSYGQDRMYQRFLRQHVDPDETGGNDSYCNLMMQRRKMTSHQCKRFNTFIHEDLWNIRSICSTTNIQCKNGQMNCHEGVVRVTDCRETGSSRAPNCRYRAKASTRRVVIACEGNPEVPVHFDK</sequence>
<feature type="signal peptide" evidence="4">
    <location>
        <begin position="1"/>
        <end position="28"/>
    </location>
</feature>
<feature type="chain" id="PRO_0000057162" description="Ribonuclease 4">
    <location>
        <begin position="29"/>
        <end position="147"/>
    </location>
</feature>
<feature type="active site" description="Proton acceptor" evidence="3">
    <location>
        <position position="40"/>
    </location>
</feature>
<feature type="active site" description="Proton donor" evidence="3">
    <location>
        <position position="144"/>
    </location>
</feature>
<feature type="binding site" evidence="1">
    <location>
        <position position="35"/>
    </location>
    <ligand>
        <name>dUMP</name>
        <dbReference type="ChEBI" id="CHEBI:246422"/>
    </ligand>
</feature>
<feature type="binding site" evidence="1">
    <location>
        <position position="40"/>
    </location>
    <ligand>
        <name>dUMP</name>
        <dbReference type="ChEBI" id="CHEBI:246422"/>
    </ligand>
</feature>
<feature type="binding site" evidence="1">
    <location>
        <position position="68"/>
    </location>
    <ligand>
        <name>dUMP</name>
        <dbReference type="ChEBI" id="CHEBI:246422"/>
    </ligand>
</feature>
<feature type="binding site" evidence="1">
    <location>
        <position position="71"/>
    </location>
    <ligand>
        <name>dUMP</name>
        <dbReference type="ChEBI" id="CHEBI:246422"/>
    </ligand>
</feature>
<feature type="binding site" evidence="1">
    <location>
        <position position="72"/>
    </location>
    <ligand>
        <name>dUMP</name>
        <dbReference type="ChEBI" id="CHEBI:246422"/>
    </ligand>
</feature>
<feature type="binding site" evidence="1">
    <location>
        <position position="145"/>
    </location>
    <ligand>
        <name>dUMP</name>
        <dbReference type="ChEBI" id="CHEBI:246422"/>
    </ligand>
</feature>
<feature type="modified residue" description="Pyrrolidone carboxylic acid" evidence="4">
    <location>
        <position position="29"/>
    </location>
</feature>
<feature type="disulfide bond" evidence="2">
    <location>
        <begin position="53"/>
        <end position="109"/>
    </location>
</feature>
<feature type="disulfide bond" evidence="2">
    <location>
        <begin position="67"/>
        <end position="120"/>
    </location>
</feature>
<feature type="disulfide bond" evidence="2">
    <location>
        <begin position="85"/>
        <end position="135"/>
    </location>
</feature>
<feature type="disulfide bond" evidence="2">
    <location>
        <begin position="92"/>
        <end position="99"/>
    </location>
</feature>
<feature type="sequence conflict" description="In Ref. 4; AAD48530." evidence="5" ref="4">
    <original>R</original>
    <variation>G</variation>
    <location>
        <position position="31"/>
    </location>
</feature>
<feature type="sequence conflict" description="In Ref. 4; AAD48530." evidence="5" ref="4">
    <original>E</original>
    <variation>Q</variation>
    <location>
        <position position="140"/>
    </location>
</feature>
<feature type="sequence conflict" description="In Ref. 4; AAD48530." evidence="5" ref="4">
    <original>K</original>
    <variation>G</variation>
    <location>
        <position position="147"/>
    </location>
</feature>
<accession>P15467</accession>
<accession>F1N6N1</accession>
<accession>Q3T184</accession>
<accession>Q58DP6</accession>
<accession>Q9TV33</accession>
<gene>
    <name type="primary">RNASE4</name>
    <name type="synonym">RNS4</name>
</gene>
<protein>
    <recommendedName>
        <fullName>Ribonuclease 4</fullName>
        <shortName>RNase 4</shortName>
        <ecNumber evidence="2">3.1.27.-</ecNumber>
    </recommendedName>
    <alternativeName>
        <fullName>Ribonuclease BL4</fullName>
    </alternativeName>
</protein>
<comment type="function">
    <text evidence="2">Cleaves preferentially after uridine bases. Has antimicrobial activity against uropathogenic E.coli (UPEC). Probably contributes to urinary tract sterility.</text>
</comment>
<comment type="subcellular location">
    <subcellularLocation>
        <location evidence="2">Secreted</location>
    </subcellularLocation>
    <text evidence="2">Detected in urine.</text>
</comment>
<comment type="similarity">
    <text evidence="5">Belongs to the pancreatic ribonuclease family.</text>
</comment>
<keyword id="KW-0044">Antibiotic</keyword>
<keyword id="KW-0929">Antimicrobial</keyword>
<keyword id="KW-0903">Direct protein sequencing</keyword>
<keyword id="KW-1015">Disulfide bond</keyword>
<keyword id="KW-0255">Endonuclease</keyword>
<keyword id="KW-0378">Hydrolase</keyword>
<keyword id="KW-0540">Nuclease</keyword>
<keyword id="KW-0873">Pyrrolidone carboxylic acid</keyword>
<keyword id="KW-1185">Reference proteome</keyword>
<keyword id="KW-0964">Secreted</keyword>
<keyword id="KW-0732">Signal</keyword>
<dbReference type="EC" id="3.1.27.-" evidence="2"/>
<dbReference type="EMBL" id="BT021551">
    <property type="protein sequence ID" value="AAX46398.1"/>
    <property type="molecule type" value="mRNA"/>
</dbReference>
<dbReference type="EMBL" id="BC102072">
    <property type="protein sequence ID" value="AAI02073.2"/>
    <property type="molecule type" value="mRNA"/>
</dbReference>
<dbReference type="EMBL" id="AF078116">
    <property type="protein sequence ID" value="AAD48530.1"/>
    <property type="molecule type" value="Genomic_DNA"/>
</dbReference>
<dbReference type="PIR" id="JX0115">
    <property type="entry name" value="JX0115"/>
</dbReference>
<dbReference type="RefSeq" id="NP_001035680.1">
    <property type="nucleotide sequence ID" value="NM_001040590.1"/>
</dbReference>
<dbReference type="SMR" id="P15467"/>
<dbReference type="FunCoup" id="P15467">
    <property type="interactions" value="89"/>
</dbReference>
<dbReference type="PaxDb" id="9913-ENSBTAP00000026127"/>
<dbReference type="Ensembl" id="ENSBTAT00000026127.6">
    <property type="protein sequence ID" value="ENSBTAP00000026127.4"/>
    <property type="gene ID" value="ENSBTAG00000019612.7"/>
</dbReference>
<dbReference type="Ensembl" id="ENSBTAT00000087027.2">
    <property type="protein sequence ID" value="ENSBTAP00000070495.2"/>
    <property type="gene ID" value="ENSBTAG00000019612.7"/>
</dbReference>
<dbReference type="Ensembl" id="ENSBTAT00000089779.1">
    <property type="protein sequence ID" value="ENSBTAP00000086952.1"/>
    <property type="gene ID" value="ENSBTAG00000019612.7"/>
</dbReference>
<dbReference type="Ensembl" id="ENSBTAT00000110125.1">
    <property type="protein sequence ID" value="ENSBTAP00000080077.1"/>
    <property type="gene ID" value="ENSBTAG00000019612.7"/>
</dbReference>
<dbReference type="GeneID" id="616089"/>
<dbReference type="KEGG" id="bta:616089"/>
<dbReference type="CTD" id="6038"/>
<dbReference type="VEuPathDB" id="HostDB:ENSBTAG00000019612"/>
<dbReference type="VGNC" id="VGNC:33998">
    <property type="gene designation" value="RNASE4"/>
</dbReference>
<dbReference type="eggNOG" id="ENOG502S9Q1">
    <property type="taxonomic scope" value="Eukaryota"/>
</dbReference>
<dbReference type="GeneTree" id="ENSGT00940000157645"/>
<dbReference type="HOGENOM" id="CLU_117006_3_1_1"/>
<dbReference type="InParanoid" id="P15467"/>
<dbReference type="OMA" id="GARNPNC"/>
<dbReference type="OrthoDB" id="8573660at2759"/>
<dbReference type="TreeFam" id="TF333393"/>
<dbReference type="Proteomes" id="UP000009136">
    <property type="component" value="Chromosome 10"/>
</dbReference>
<dbReference type="Bgee" id="ENSBTAG00000019612">
    <property type="expression patterns" value="Expressed in liver and 105 other cell types or tissues"/>
</dbReference>
<dbReference type="GO" id="GO:0005615">
    <property type="term" value="C:extracellular space"/>
    <property type="evidence" value="ECO:0000250"/>
    <property type="project" value="UniProtKB"/>
</dbReference>
<dbReference type="GO" id="GO:0004519">
    <property type="term" value="F:endonuclease activity"/>
    <property type="evidence" value="ECO:0007669"/>
    <property type="project" value="UniProtKB-KW"/>
</dbReference>
<dbReference type="GO" id="GO:0003676">
    <property type="term" value="F:nucleic acid binding"/>
    <property type="evidence" value="ECO:0007669"/>
    <property type="project" value="InterPro"/>
</dbReference>
<dbReference type="GO" id="GO:0004540">
    <property type="term" value="F:RNA nuclease activity"/>
    <property type="evidence" value="ECO:0000318"/>
    <property type="project" value="GO_Central"/>
</dbReference>
<dbReference type="GO" id="GO:0019731">
    <property type="term" value="P:antibacterial humoral response"/>
    <property type="evidence" value="ECO:0000250"/>
    <property type="project" value="UniProtKB"/>
</dbReference>
<dbReference type="GO" id="GO:0050830">
    <property type="term" value="P:defense response to Gram-positive bacterium"/>
    <property type="evidence" value="ECO:0000318"/>
    <property type="project" value="GO_Central"/>
</dbReference>
<dbReference type="CDD" id="cd06265">
    <property type="entry name" value="RNase_A_canonical"/>
    <property type="match status" value="1"/>
</dbReference>
<dbReference type="FunFam" id="3.10.130.10:FF:000001">
    <property type="entry name" value="Ribonuclease pancreatic"/>
    <property type="match status" value="1"/>
</dbReference>
<dbReference type="Gene3D" id="3.10.130.10">
    <property type="entry name" value="Ribonuclease A-like domain"/>
    <property type="match status" value="1"/>
</dbReference>
<dbReference type="InterPro" id="IPR001427">
    <property type="entry name" value="RNaseA"/>
</dbReference>
<dbReference type="InterPro" id="IPR036816">
    <property type="entry name" value="RNaseA-like_dom_sf"/>
</dbReference>
<dbReference type="InterPro" id="IPR023411">
    <property type="entry name" value="RNaseA_AS"/>
</dbReference>
<dbReference type="InterPro" id="IPR023412">
    <property type="entry name" value="RNaseA_domain"/>
</dbReference>
<dbReference type="PANTHER" id="PTHR11437">
    <property type="entry name" value="RIBONUCLEASE"/>
    <property type="match status" value="1"/>
</dbReference>
<dbReference type="PANTHER" id="PTHR11437:SF53">
    <property type="entry name" value="RIBONUCLEASE 4"/>
    <property type="match status" value="1"/>
</dbReference>
<dbReference type="Pfam" id="PF00074">
    <property type="entry name" value="RnaseA"/>
    <property type="match status" value="1"/>
</dbReference>
<dbReference type="PRINTS" id="PR00794">
    <property type="entry name" value="RIBONUCLEASE"/>
</dbReference>
<dbReference type="SMART" id="SM00092">
    <property type="entry name" value="RNAse_Pc"/>
    <property type="match status" value="1"/>
</dbReference>
<dbReference type="SUPFAM" id="SSF54076">
    <property type="entry name" value="RNase A-like"/>
    <property type="match status" value="1"/>
</dbReference>
<dbReference type="PROSITE" id="PS00127">
    <property type="entry name" value="RNASE_PANCREATIC"/>
    <property type="match status" value="1"/>
</dbReference>